<protein>
    <recommendedName>
        <fullName evidence="1">Large ribosomal subunit protein bL28</fullName>
    </recommendedName>
    <alternativeName>
        <fullName evidence="2">50S ribosomal protein L28</fullName>
    </alternativeName>
</protein>
<proteinExistence type="inferred from homology"/>
<name>RL28_THEP3</name>
<comment type="similarity">
    <text evidence="1">Belongs to the bacterial ribosomal protein bL28 family.</text>
</comment>
<gene>
    <name evidence="1" type="primary">rpmB</name>
    <name type="ordered locus">Teth39_1308</name>
</gene>
<sequence length="62" mass="7045">MLKCDICGKGPLAGYQYSHSHRKSIRKWKPNIKKVRAIVDDTPVRLHVCTKCLKAGKVQRAL</sequence>
<dbReference type="EMBL" id="CP000924">
    <property type="protein sequence ID" value="ABY94962.1"/>
    <property type="molecule type" value="Genomic_DNA"/>
</dbReference>
<dbReference type="RefSeq" id="WP_012269386.1">
    <property type="nucleotide sequence ID" value="NC_010321.1"/>
</dbReference>
<dbReference type="SMR" id="B0K9Z9"/>
<dbReference type="STRING" id="340099.Teth39_1308"/>
<dbReference type="KEGG" id="tpd:Teth39_1308"/>
<dbReference type="eggNOG" id="COG0227">
    <property type="taxonomic scope" value="Bacteria"/>
</dbReference>
<dbReference type="HOGENOM" id="CLU_064548_7_0_9"/>
<dbReference type="Proteomes" id="UP000002156">
    <property type="component" value="Chromosome"/>
</dbReference>
<dbReference type="GO" id="GO:1990904">
    <property type="term" value="C:ribonucleoprotein complex"/>
    <property type="evidence" value="ECO:0007669"/>
    <property type="project" value="UniProtKB-KW"/>
</dbReference>
<dbReference type="GO" id="GO:0005840">
    <property type="term" value="C:ribosome"/>
    <property type="evidence" value="ECO:0007669"/>
    <property type="project" value="UniProtKB-KW"/>
</dbReference>
<dbReference type="GO" id="GO:0003735">
    <property type="term" value="F:structural constituent of ribosome"/>
    <property type="evidence" value="ECO:0007669"/>
    <property type="project" value="InterPro"/>
</dbReference>
<dbReference type="GO" id="GO:0006412">
    <property type="term" value="P:translation"/>
    <property type="evidence" value="ECO:0007669"/>
    <property type="project" value="UniProtKB-UniRule"/>
</dbReference>
<dbReference type="Gene3D" id="2.30.170.40">
    <property type="entry name" value="Ribosomal protein L28/L24"/>
    <property type="match status" value="1"/>
</dbReference>
<dbReference type="HAMAP" id="MF_00373">
    <property type="entry name" value="Ribosomal_bL28"/>
    <property type="match status" value="1"/>
</dbReference>
<dbReference type="InterPro" id="IPR050096">
    <property type="entry name" value="Bacterial_rp_bL28"/>
</dbReference>
<dbReference type="InterPro" id="IPR026569">
    <property type="entry name" value="Ribosomal_bL28"/>
</dbReference>
<dbReference type="InterPro" id="IPR034704">
    <property type="entry name" value="Ribosomal_bL28/bL31-like_sf"/>
</dbReference>
<dbReference type="InterPro" id="IPR001383">
    <property type="entry name" value="Ribosomal_bL28_bact-type"/>
</dbReference>
<dbReference type="InterPro" id="IPR037147">
    <property type="entry name" value="Ribosomal_bL28_sf"/>
</dbReference>
<dbReference type="NCBIfam" id="TIGR00009">
    <property type="entry name" value="L28"/>
    <property type="match status" value="1"/>
</dbReference>
<dbReference type="PANTHER" id="PTHR39080">
    <property type="entry name" value="50S RIBOSOMAL PROTEIN L28"/>
    <property type="match status" value="1"/>
</dbReference>
<dbReference type="PANTHER" id="PTHR39080:SF1">
    <property type="entry name" value="LARGE RIBOSOMAL SUBUNIT PROTEIN BL28A"/>
    <property type="match status" value="1"/>
</dbReference>
<dbReference type="Pfam" id="PF00830">
    <property type="entry name" value="Ribosomal_L28"/>
    <property type="match status" value="1"/>
</dbReference>
<dbReference type="SUPFAM" id="SSF143800">
    <property type="entry name" value="L28p-like"/>
    <property type="match status" value="1"/>
</dbReference>
<keyword id="KW-1185">Reference proteome</keyword>
<keyword id="KW-0687">Ribonucleoprotein</keyword>
<keyword id="KW-0689">Ribosomal protein</keyword>
<feature type="chain" id="PRO_1000121701" description="Large ribosomal subunit protein bL28">
    <location>
        <begin position="1"/>
        <end position="62"/>
    </location>
</feature>
<evidence type="ECO:0000255" key="1">
    <source>
        <dbReference type="HAMAP-Rule" id="MF_00373"/>
    </source>
</evidence>
<evidence type="ECO:0000305" key="2"/>
<reference key="1">
    <citation type="submission" date="2008-01" db="EMBL/GenBank/DDBJ databases">
        <title>Complete sequence of Thermoanaerobacter pseudethanolicus 39E.</title>
        <authorList>
            <person name="Copeland A."/>
            <person name="Lucas S."/>
            <person name="Lapidus A."/>
            <person name="Barry K."/>
            <person name="Glavina del Rio T."/>
            <person name="Dalin E."/>
            <person name="Tice H."/>
            <person name="Pitluck S."/>
            <person name="Bruce D."/>
            <person name="Goodwin L."/>
            <person name="Saunders E."/>
            <person name="Brettin T."/>
            <person name="Detter J.C."/>
            <person name="Han C."/>
            <person name="Schmutz J."/>
            <person name="Larimer F."/>
            <person name="Land M."/>
            <person name="Hauser L."/>
            <person name="Kyrpides N."/>
            <person name="Lykidis A."/>
            <person name="Hemme C."/>
            <person name="Fields M.W."/>
            <person name="He Z."/>
            <person name="Zhou J."/>
            <person name="Richardson P."/>
        </authorList>
    </citation>
    <scope>NUCLEOTIDE SEQUENCE [LARGE SCALE GENOMIC DNA]</scope>
    <source>
        <strain>ATCC 33223 / DSM 2355 / 39E</strain>
    </source>
</reference>
<organism>
    <name type="scientific">Thermoanaerobacter pseudethanolicus (strain ATCC 33223 / 39E)</name>
    <name type="common">Clostridium thermohydrosulfuricum</name>
    <dbReference type="NCBI Taxonomy" id="340099"/>
    <lineage>
        <taxon>Bacteria</taxon>
        <taxon>Bacillati</taxon>
        <taxon>Bacillota</taxon>
        <taxon>Clostridia</taxon>
        <taxon>Thermoanaerobacterales</taxon>
        <taxon>Thermoanaerobacteraceae</taxon>
        <taxon>Thermoanaerobacter</taxon>
    </lineage>
</organism>
<accession>B0K9Z9</accession>